<feature type="chain" id="PRO_0000192629" description="Prepilin leader peptidase/N-methyltransferase">
    <location>
        <begin position="1"/>
        <end position="253"/>
    </location>
</feature>
<feature type="transmembrane region" description="Helical" evidence="2">
    <location>
        <begin position="4"/>
        <end position="24"/>
    </location>
</feature>
<feature type="transmembrane region" description="Helical" evidence="2">
    <location>
        <begin position="80"/>
        <end position="100"/>
    </location>
</feature>
<feature type="transmembrane region" description="Helical" evidence="2">
    <location>
        <begin position="106"/>
        <end position="126"/>
    </location>
</feature>
<feature type="transmembrane region" description="Helical" evidence="2">
    <location>
        <begin position="129"/>
        <end position="149"/>
    </location>
</feature>
<feature type="transmembrane region" description="Helical" evidence="2">
    <location>
        <begin position="159"/>
        <end position="179"/>
    </location>
</feature>
<feature type="transmembrane region" description="Helical" evidence="2">
    <location>
        <begin position="198"/>
        <end position="218"/>
    </location>
</feature>
<feature type="transmembrane region" description="Helical" evidence="2">
    <location>
        <begin position="230"/>
        <end position="250"/>
    </location>
</feature>
<feature type="binding site" evidence="1">
    <location>
        <position position="48"/>
    </location>
    <ligand>
        <name>Zn(2+)</name>
        <dbReference type="ChEBI" id="CHEBI:29105"/>
    </ligand>
</feature>
<feature type="binding site" evidence="1">
    <location>
        <position position="51"/>
    </location>
    <ligand>
        <name>Zn(2+)</name>
        <dbReference type="ChEBI" id="CHEBI:29105"/>
    </ligand>
</feature>
<feature type="binding site" evidence="1">
    <location>
        <position position="73"/>
    </location>
    <ligand>
        <name>Zn(2+)</name>
        <dbReference type="ChEBI" id="CHEBI:29105"/>
    </ligand>
</feature>
<feature type="binding site" evidence="1">
    <location>
        <position position="76"/>
    </location>
    <ligand>
        <name>Zn(2+)</name>
        <dbReference type="ChEBI" id="CHEBI:29105"/>
    </ligand>
</feature>
<feature type="sequence conflict" description="In Ref. 2; CAA45466." evidence="3" ref="2">
    <original>K</original>
    <variation>N</variation>
    <location>
        <position position="72"/>
    </location>
</feature>
<comment type="function">
    <text evidence="1">Plays an essential role in type IV pili and type II pseudopili formation by proteolytically removing the leader sequence from substrate proteins and subsequently monomethylating the alpha-amino group of the newly exposed N-terminal phenylalanine.</text>
</comment>
<comment type="catalytic activity">
    <reaction evidence="1">
        <text>Typically cleaves a -Gly-|-Phe- bond to release an N-terminal, basic peptide of 5-8 residues from type IV prepilin, and then N-methylates the new N-terminal amino group, the methyl donor being S-adenosyl-L-methionine.</text>
        <dbReference type="EC" id="3.4.23.43"/>
    </reaction>
</comment>
<comment type="cofactor">
    <cofactor evidence="1">
        <name>Zn(2+)</name>
        <dbReference type="ChEBI" id="CHEBI:29105"/>
    </cofactor>
    <text evidence="1">Zinc is required for the N-terminal methylation of the mature pilin, but not for signal peptide cleavage.</text>
</comment>
<comment type="subcellular location">
    <subcellularLocation>
        <location evidence="1">Cell inner membrane</location>
        <topology evidence="1">Multi-pass membrane protein</topology>
    </subcellularLocation>
</comment>
<comment type="similarity">
    <text evidence="3">Belongs to the peptidase A24 family.</text>
</comment>
<keyword id="KW-0997">Cell inner membrane</keyword>
<keyword id="KW-1003">Cell membrane</keyword>
<keyword id="KW-0378">Hydrolase</keyword>
<keyword id="KW-0472">Membrane</keyword>
<keyword id="KW-0479">Metal-binding</keyword>
<keyword id="KW-0489">Methyltransferase</keyword>
<keyword id="KW-0511">Multifunctional enzyme</keyword>
<keyword id="KW-0645">Protease</keyword>
<keyword id="KW-1185">Reference proteome</keyword>
<keyword id="KW-0949">S-adenosyl-L-methionine</keyword>
<keyword id="KW-0808">Transferase</keyword>
<keyword id="KW-0812">Transmembrane</keyword>
<keyword id="KW-1133">Transmembrane helix</keyword>
<keyword id="KW-0862">Zinc</keyword>
<evidence type="ECO:0000250" key="1">
    <source>
        <dbReference type="UniProtKB" id="P22610"/>
    </source>
</evidence>
<evidence type="ECO:0000255" key="2"/>
<evidence type="ECO:0000305" key="3"/>
<dbReference type="EC" id="3.4.23.43" evidence="1"/>
<dbReference type="EC" id="2.1.1.-" evidence="1"/>
<dbReference type="EMBL" id="AE003852">
    <property type="protein sequence ID" value="AAF94002.1"/>
    <property type="molecule type" value="Genomic_DNA"/>
</dbReference>
<dbReference type="EMBL" id="X64098">
    <property type="protein sequence ID" value="CAA45466.1"/>
    <property type="molecule type" value="Genomic_DNA"/>
</dbReference>
<dbReference type="EMBL" id="L01623">
    <property type="status" value="NOT_ANNOTATED_CDS"/>
    <property type="molecule type" value="Genomic_DNA"/>
</dbReference>
<dbReference type="PIR" id="A40582">
    <property type="entry name" value="A40582"/>
</dbReference>
<dbReference type="PIR" id="D82273">
    <property type="entry name" value="D82273"/>
</dbReference>
<dbReference type="RefSeq" id="NP_230487.1">
    <property type="nucleotide sequence ID" value="NC_002505.1"/>
</dbReference>
<dbReference type="RefSeq" id="WP_000456980.1">
    <property type="nucleotide sequence ID" value="NZ_LT906614.1"/>
</dbReference>
<dbReference type="STRING" id="243277.VC_0839"/>
<dbReference type="MEROPS" id="A24.001"/>
<dbReference type="DNASU" id="2614506"/>
<dbReference type="EnsemblBacteria" id="AAF94002">
    <property type="protein sequence ID" value="AAF94002"/>
    <property type="gene ID" value="VC_0839"/>
</dbReference>
<dbReference type="KEGG" id="vch:VC_0839"/>
<dbReference type="PATRIC" id="fig|243277.26.peg.800"/>
<dbReference type="eggNOG" id="COG1989">
    <property type="taxonomic scope" value="Bacteria"/>
</dbReference>
<dbReference type="HOGENOM" id="CLU_057101_0_1_6"/>
<dbReference type="Proteomes" id="UP000000584">
    <property type="component" value="Chromosome 1"/>
</dbReference>
<dbReference type="GO" id="GO:0005886">
    <property type="term" value="C:plasma membrane"/>
    <property type="evidence" value="ECO:0000318"/>
    <property type="project" value="GO_Central"/>
</dbReference>
<dbReference type="GO" id="GO:0004190">
    <property type="term" value="F:aspartic-type endopeptidase activity"/>
    <property type="evidence" value="ECO:0000318"/>
    <property type="project" value="GO_Central"/>
</dbReference>
<dbReference type="GO" id="GO:0046872">
    <property type="term" value="F:metal ion binding"/>
    <property type="evidence" value="ECO:0007669"/>
    <property type="project" value="UniProtKB-KW"/>
</dbReference>
<dbReference type="GO" id="GO:0008168">
    <property type="term" value="F:methyltransferase activity"/>
    <property type="evidence" value="ECO:0007669"/>
    <property type="project" value="UniProtKB-KW"/>
</dbReference>
<dbReference type="GO" id="GO:0032259">
    <property type="term" value="P:methylation"/>
    <property type="evidence" value="ECO:0007669"/>
    <property type="project" value="UniProtKB-KW"/>
</dbReference>
<dbReference type="GO" id="GO:0006465">
    <property type="term" value="P:signal peptide processing"/>
    <property type="evidence" value="ECO:0000318"/>
    <property type="project" value="GO_Central"/>
</dbReference>
<dbReference type="Gene3D" id="1.20.120.1220">
    <property type="match status" value="1"/>
</dbReference>
<dbReference type="InterPro" id="IPR014032">
    <property type="entry name" value="Peptidase_A24A_bac"/>
</dbReference>
<dbReference type="InterPro" id="IPR000045">
    <property type="entry name" value="Prepilin_IV_endopep_pep"/>
</dbReference>
<dbReference type="InterPro" id="IPR010627">
    <property type="entry name" value="Prepilin_pept_A24_N"/>
</dbReference>
<dbReference type="InterPro" id="IPR050882">
    <property type="entry name" value="Prepilin_peptidase/N-MTase"/>
</dbReference>
<dbReference type="PANTHER" id="PTHR30487:SF0">
    <property type="entry name" value="PREPILIN LEADER PEPTIDASE_N-METHYLTRANSFERASE-RELATED"/>
    <property type="match status" value="1"/>
</dbReference>
<dbReference type="PANTHER" id="PTHR30487">
    <property type="entry name" value="TYPE 4 PREPILIN-LIKE PROTEINS LEADER PEPTIDE-PROCESSING ENZYME"/>
    <property type="match status" value="1"/>
</dbReference>
<dbReference type="Pfam" id="PF06750">
    <property type="entry name" value="A24_N_bact"/>
    <property type="match status" value="1"/>
</dbReference>
<dbReference type="Pfam" id="PF01478">
    <property type="entry name" value="Peptidase_A24"/>
    <property type="match status" value="1"/>
</dbReference>
<dbReference type="PRINTS" id="PR00864">
    <property type="entry name" value="PREPILNPTASE"/>
</dbReference>
<accession>P0C6D9</accession>
<accession>P27717</accession>
<accession>Q56668</accession>
<accession>Q9JQ05</accession>
<protein>
    <recommendedName>
        <fullName>Prepilin leader peptidase/N-methyltransferase</fullName>
    </recommendedName>
    <domain>
        <recommendedName>
            <fullName>Leader peptidase</fullName>
            <ecNumber evidence="1">3.4.23.43</ecNumber>
        </recommendedName>
        <alternativeName>
            <fullName>Prepilin peptidase</fullName>
        </alternativeName>
    </domain>
    <domain>
        <recommendedName>
            <fullName>N-methyltransferase</fullName>
            <ecNumber evidence="1">2.1.1.-</ecNumber>
        </recommendedName>
    </domain>
</protein>
<proteinExistence type="inferred from homology"/>
<gene>
    <name type="primary">tcpJ</name>
    <name type="ordered locus">VC_0839</name>
</gene>
<reference key="1">
    <citation type="journal article" date="2000" name="Nature">
        <title>DNA sequence of both chromosomes of the cholera pathogen Vibrio cholerae.</title>
        <authorList>
            <person name="Heidelberg J.F."/>
            <person name="Eisen J.A."/>
            <person name="Nelson W.C."/>
            <person name="Clayton R.A."/>
            <person name="Gwinn M.L."/>
            <person name="Dodson R.J."/>
            <person name="Haft D.H."/>
            <person name="Hickey E.K."/>
            <person name="Peterson J.D."/>
            <person name="Umayam L.A."/>
            <person name="Gill S.R."/>
            <person name="Nelson K.E."/>
            <person name="Read T.D."/>
            <person name="Tettelin H."/>
            <person name="Richardson D.L."/>
            <person name="Ermolaeva M.D."/>
            <person name="Vamathevan J.J."/>
            <person name="Bass S."/>
            <person name="Qin H."/>
            <person name="Dragoi I."/>
            <person name="Sellers P."/>
            <person name="McDonald L.A."/>
            <person name="Utterback T.R."/>
            <person name="Fleischmann R.D."/>
            <person name="Nierman W.C."/>
            <person name="White O."/>
            <person name="Salzberg S.L."/>
            <person name="Smith H.O."/>
            <person name="Colwell R.R."/>
            <person name="Mekalanos J.J."/>
            <person name="Venter J.C."/>
            <person name="Fraser C.M."/>
        </authorList>
    </citation>
    <scope>NUCLEOTIDE SEQUENCE [LARGE SCALE GENOMIC DNA]</scope>
    <source>
        <strain>ATCC 39315 / El Tor Inaba N16961</strain>
    </source>
</reference>
<reference key="2">
    <citation type="journal article" date="1992" name="Gene">
        <title>Homology of TcpN, a putative regulatory protein of Vibrio cholerae, to the AraC family of transcriptional activators.</title>
        <authorList>
            <person name="Ogierman M.A."/>
            <person name="Manning P.A."/>
        </authorList>
    </citation>
    <scope>NUCLEOTIDE SEQUENCE [GENOMIC DNA] OF 1-72</scope>
    <source>
        <strain>Classical Inaba Z17561 / Serotype O1</strain>
    </source>
</reference>
<reference key="3">
    <citation type="journal article" date="1992" name="J. Bacteriol.">
        <title>The virulence gene activator ToxT from Vibrio cholerae is a member of the AraC family of transcriptional activators.</title>
        <authorList>
            <person name="Higgins D.E."/>
            <person name="Nazareno E."/>
            <person name="DiRita V.J."/>
        </authorList>
    </citation>
    <scope>NUCLEOTIDE SEQUENCE [GENOMIC DNA] OF 1-20</scope>
    <source>
        <strain>ATCC 25870 / Classical Inaba 569B / Serotype O1</strain>
    </source>
</reference>
<organism>
    <name type="scientific">Vibrio cholerae serotype O1 (strain ATCC 39315 / El Tor Inaba N16961)</name>
    <dbReference type="NCBI Taxonomy" id="243277"/>
    <lineage>
        <taxon>Bacteria</taxon>
        <taxon>Pseudomonadati</taxon>
        <taxon>Pseudomonadota</taxon>
        <taxon>Gammaproteobacteria</taxon>
        <taxon>Vibrionales</taxon>
        <taxon>Vibrionaceae</taxon>
        <taxon>Vibrio</taxon>
    </lineage>
</organism>
<name>LEP4_VIBCH</name>
<sequence length="253" mass="29337">MEYVYLILFSIVSLILGSFSNVVIYRLPRKILLKNHFFYDIDSNRSMCPKCGNKISWYDNVPLLSYLLLHGKCRHCDEKISLSYFIVELSFFIIAFPIYWLSTDWVDSFVLLGLYFILFNLFVIDFKSMLLPNLLTYPIFMLAFIYVQQNPALTVESSIIGGFAAFIISYVSNFIVRLFKRIDVMGGGDIKLYTAIGTLIGVEFVPYLFLLSSIIAFIHWFFARVSCRYCLYIPLGPSIIISFVIVFFSIRLM</sequence>